<comment type="function">
    <text evidence="2 6">Packages the positive strand viral genome RNA into a helical ribonucleocapsid (RNP) and plays a fundamental role during virion assembly through its interactions with the viral genome and membrane protein M. Plays an important role in enhancing the efficiency of subgenomic viral RNA transcription as well as viral replication.</text>
</comment>
<comment type="subunit">
    <text evidence="2 6">Homooligomer. Both monomeric and oligomeric forms interact with RNA. Interacts with protein M. Interacts with NSP3; this interaction serves to tether the genome to the newly translated replicase-transcriptase complex at a very early stage of infection (By similarity). Interacts (when phosphorylated) with host DDX1; this interaction is essential to produce a full set of subgenomic and genomic RNAs (PubMed:25299332).</text>
</comment>
<comment type="subcellular location">
    <subcellularLocation>
        <location evidence="2">Virion</location>
    </subcellularLocation>
    <subcellularLocation>
        <location evidence="2">Host endoplasmic reticulum-Golgi intermediate compartment</location>
    </subcellularLocation>
    <subcellularLocation>
        <location evidence="2">Host Golgi apparatus</location>
    </subcellularLocation>
    <text evidence="2">Located inside the virion, complexed with the viral RNA. Probably associates with ER-derived membranes where it participates in viral RNA synthesis and virus budding.</text>
</comment>
<comment type="PTM">
    <text evidence="2">ADP-ribosylated. The ADP-ribosylation is retained in the virion during infection.</text>
</comment>
<comment type="PTM">
    <text evidence="2 6">Phosphorylated on serine and threonine residues (By similarity). Phosphorylated by host GSK3A and GSK3B. Phosphorylation allows recruitment of host RNA helicase DDX1 which facilitates template readthrough and enables longer subgenomic mRNA synthesis.</text>
</comment>
<comment type="similarity">
    <text evidence="2">Belongs to the betacoronavirus nucleocapsid protein family.</text>
</comment>
<name>NCAP_CVMJH</name>
<organism>
    <name type="scientific">Murine coronavirus (strain JHM)</name>
    <name type="common">MHV-JHM</name>
    <name type="synonym">Murine hepatitis virus</name>
    <dbReference type="NCBI Taxonomy" id="11144"/>
    <lineage>
        <taxon>Viruses</taxon>
        <taxon>Riboviria</taxon>
        <taxon>Orthornavirae</taxon>
        <taxon>Pisuviricota</taxon>
        <taxon>Pisoniviricetes</taxon>
        <taxon>Nidovirales</taxon>
        <taxon>Cornidovirineae</taxon>
        <taxon>Coronaviridae</taxon>
        <taxon>Orthocoronavirinae</taxon>
        <taxon>Betacoronavirus</taxon>
        <taxon>Embecovirus</taxon>
        <taxon>Murine coronavirus</taxon>
    </lineage>
</organism>
<feature type="chain" id="PRO_0000106009" description="Nucleoprotein">
    <location>
        <begin position="1"/>
        <end position="455"/>
    </location>
</feature>
<feature type="domain" description="CoV N NTD" evidence="3">
    <location>
        <begin position="64"/>
        <end position="193"/>
    </location>
</feature>
<feature type="domain" description="CoV N CTD" evidence="4">
    <location>
        <begin position="260"/>
        <end position="383"/>
    </location>
</feature>
<feature type="region of interest" description="Disordered" evidence="5">
    <location>
        <begin position="1"/>
        <end position="62"/>
    </location>
</feature>
<feature type="region of interest" description="RNA-binding" evidence="2">
    <location>
        <begin position="56"/>
        <end position="197"/>
    </location>
</feature>
<feature type="region of interest" description="Disordered" evidence="5">
    <location>
        <begin position="159"/>
        <end position="230"/>
    </location>
</feature>
<feature type="region of interest" description="Dimerization" evidence="2">
    <location>
        <begin position="267"/>
        <end position="384"/>
    </location>
</feature>
<feature type="region of interest" description="Disordered" evidence="5">
    <location>
        <begin position="271"/>
        <end position="290"/>
    </location>
</feature>
<feature type="region of interest" description="Disordered" evidence="5">
    <location>
        <begin position="382"/>
        <end position="429"/>
    </location>
</feature>
<feature type="compositionally biased region" description="Low complexity" evidence="5">
    <location>
        <begin position="9"/>
        <end position="23"/>
    </location>
</feature>
<feature type="compositionally biased region" description="Polar residues" evidence="5">
    <location>
        <begin position="30"/>
        <end position="42"/>
    </location>
</feature>
<feature type="compositionally biased region" description="Polar residues" evidence="5">
    <location>
        <begin position="49"/>
        <end position="61"/>
    </location>
</feature>
<feature type="compositionally biased region" description="Low complexity" evidence="5">
    <location>
        <begin position="193"/>
        <end position="212"/>
    </location>
</feature>
<feature type="compositionally biased region" description="Polar residues" evidence="5">
    <location>
        <begin position="215"/>
        <end position="227"/>
    </location>
</feature>
<feature type="compositionally biased region" description="Basic residues" evidence="5">
    <location>
        <begin position="393"/>
        <end position="402"/>
    </location>
</feature>
<feature type="binding site" evidence="1">
    <location>
        <position position="109"/>
    </location>
    <ligand>
        <name>RNA</name>
        <dbReference type="ChEBI" id="CHEBI:33697"/>
    </ligand>
</feature>
<feature type="binding site" evidence="1">
    <location>
        <position position="125"/>
    </location>
    <ligand>
        <name>RNA</name>
        <dbReference type="ChEBI" id="CHEBI:33697"/>
    </ligand>
</feature>
<feature type="binding site" evidence="1">
    <location>
        <position position="167"/>
    </location>
    <ligand>
        <name>RNA</name>
        <dbReference type="ChEBI" id="CHEBI:33697"/>
    </ligand>
</feature>
<feature type="modified residue" description="Phosphoserine; by host" evidence="2">
    <location>
        <position position="170"/>
    </location>
</feature>
<feature type="modified residue" description="Phosphothreonine; by host" evidence="2">
    <location>
        <position position="177"/>
    </location>
</feature>
<feature type="modified residue" description="Phosphoserine; by host" evidence="2">
    <location>
        <position position="194"/>
    </location>
</feature>
<feature type="modified residue" description="Phosphoserine; by host" evidence="2">
    <location>
        <position position="390"/>
    </location>
</feature>
<feature type="modified residue" description="Phosphoserine; by host" evidence="2">
    <location>
        <position position="425"/>
    </location>
</feature>
<feature type="modified residue" description="Phosphothreonine; by host" evidence="2">
    <location>
        <position position="429"/>
    </location>
</feature>
<reference key="1">
    <citation type="journal article" date="1983" name="Nucleic Acids Res.">
        <title>Coronavirus JHM: nucleotide sequence of the mRNA that encodes nucleocapsid protein.</title>
        <authorList>
            <person name="Skinner M.A."/>
            <person name="Siddell S.G."/>
        </authorList>
    </citation>
    <scope>NUCLEOTIDE SEQUENCE [MRNA]</scope>
</reference>
<reference key="2">
    <citation type="journal article" date="2014" name="Cell Host Microbe">
        <title>Nucleocapsid phosphorylation and RNA helicase DDX1 recruitment enables coronavirus transition from discontinuous to continuous transcription.</title>
        <authorList>
            <person name="Wu C.H."/>
            <person name="Chen P.J."/>
            <person name="Yeh S.H."/>
        </authorList>
    </citation>
    <scope>FUNCTION</scope>
    <scope>INTERACTION WITH HOST DDX1</scope>
    <scope>PHOSPHORYLATION</scope>
</reference>
<gene>
    <name evidence="2" type="primary">N</name>
    <name type="ORF">7a</name>
</gene>
<evidence type="ECO:0000250" key="1">
    <source>
        <dbReference type="UniProtKB" id="P0DTC9"/>
    </source>
</evidence>
<evidence type="ECO:0000255" key="2">
    <source>
        <dbReference type="HAMAP-Rule" id="MF_04096"/>
    </source>
</evidence>
<evidence type="ECO:0000255" key="3">
    <source>
        <dbReference type="PROSITE-ProRule" id="PRU01276"/>
    </source>
</evidence>
<evidence type="ECO:0000255" key="4">
    <source>
        <dbReference type="PROSITE-ProRule" id="PRU01277"/>
    </source>
</evidence>
<evidence type="ECO:0000256" key="5">
    <source>
        <dbReference type="SAM" id="MobiDB-lite"/>
    </source>
</evidence>
<evidence type="ECO:0000269" key="6">
    <source>
    </source>
</evidence>
<protein>
    <recommendedName>
        <fullName evidence="2">Nucleoprotein</fullName>
    </recommendedName>
    <alternativeName>
        <fullName evidence="2">Nucleocapsid protein</fullName>
        <shortName evidence="2">NC</shortName>
        <shortName evidence="2">Protein N</shortName>
    </alternativeName>
</protein>
<proteinExistence type="evidence at protein level"/>
<sequence>MSFVPGQENAGSRSSSGNRAGNGILKKTTWADQTERGLNNQNRGRKNQPKQTATTQPNSGSVVPHYSWFSGITQFQKGKEFQFAQGQGVPIANGIPASQQKGYWYRHNRRSFKTPDGQQKQLLPRWYFYYLGTGPYAGAEYGDDIEGVVWVASQQAETRTSADIVERDPSSHEAIPTRFAPGTVLPQGFYVEGSGRSAPASRSGSRPQSRGPNNRARSSSNQRQPASTVKPDMAEEIAALVLAKLGKDAGQPKQVTKQSAKEVRQKILNKPRQKRTPNKQCPVQQCFGKRGPNQNFGGPEMLKLGTSDPQFPILAELAPTAGAFFFGSKLELVKKNSGGADGPTKDVYELQYSGAVRFDSTLPGFETIMKVLNENLNAYQNQDGGADVVSPKPQRKRGTKQKAQKDEVDNVSVAKPKSSVQRNVSRELTPEDRSLLAQILDDGVVPDGLEDDSNV</sequence>
<dbReference type="EMBL" id="X00990">
    <property type="protein sequence ID" value="CAA25497.1"/>
    <property type="molecule type" value="mRNA"/>
</dbReference>
<dbReference type="PIR" id="A04024">
    <property type="entry name" value="VHIHMJ"/>
</dbReference>
<dbReference type="RefSeq" id="YP_209238.1">
    <property type="nucleotide sequence ID" value="AC_000192.1"/>
</dbReference>
<dbReference type="SMR" id="P03417"/>
<dbReference type="KEGG" id="vg:3283260"/>
<dbReference type="Proteomes" id="UP000007193">
    <property type="component" value="Genome"/>
</dbReference>
<dbReference type="GO" id="GO:0044172">
    <property type="term" value="C:host cell endoplasmic reticulum-Golgi intermediate compartment"/>
    <property type="evidence" value="ECO:0007669"/>
    <property type="project" value="UniProtKB-SubCell"/>
</dbReference>
<dbReference type="GO" id="GO:0044177">
    <property type="term" value="C:host cell Golgi apparatus"/>
    <property type="evidence" value="ECO:0007669"/>
    <property type="project" value="UniProtKB-SubCell"/>
</dbReference>
<dbReference type="GO" id="GO:1990904">
    <property type="term" value="C:ribonucleoprotein complex"/>
    <property type="evidence" value="ECO:0007669"/>
    <property type="project" value="UniProtKB-KW"/>
</dbReference>
<dbReference type="GO" id="GO:0019013">
    <property type="term" value="C:viral nucleocapsid"/>
    <property type="evidence" value="ECO:0007669"/>
    <property type="project" value="UniProtKB-UniRule"/>
</dbReference>
<dbReference type="GO" id="GO:0003723">
    <property type="term" value="F:RNA binding"/>
    <property type="evidence" value="ECO:0007669"/>
    <property type="project" value="UniProtKB-UniRule"/>
</dbReference>
<dbReference type="CDD" id="cd21595">
    <property type="entry name" value="CoV_N-CTD"/>
    <property type="match status" value="1"/>
</dbReference>
<dbReference type="CDD" id="cd21554">
    <property type="entry name" value="CoV_N-NTD"/>
    <property type="match status" value="1"/>
</dbReference>
<dbReference type="HAMAP" id="MF_04096">
    <property type="entry name" value="BETA_CORONA_NCAP"/>
    <property type="match status" value="1"/>
</dbReference>
<dbReference type="InterPro" id="IPR044344">
    <property type="entry name" value="N_prot_C_CoV"/>
</dbReference>
<dbReference type="InterPro" id="IPR044345">
    <property type="entry name" value="N_prot_N_CoV"/>
</dbReference>
<dbReference type="InterPro" id="IPR043505">
    <property type="entry name" value="NCAP_bCoV"/>
</dbReference>
<dbReference type="InterPro" id="IPR001218">
    <property type="entry name" value="Nucleocap_CoV"/>
</dbReference>
<dbReference type="InterPro" id="IPR037179">
    <property type="entry name" value="Nucleocapsid_C"/>
</dbReference>
<dbReference type="InterPro" id="IPR037195">
    <property type="entry name" value="Nucleocapsid_N"/>
</dbReference>
<dbReference type="Pfam" id="PF00937">
    <property type="entry name" value="CoV_nucleocap"/>
    <property type="match status" value="1"/>
</dbReference>
<dbReference type="PIRSF" id="PIRSF003888">
    <property type="entry name" value="Corona_nucleocap"/>
    <property type="match status" value="1"/>
</dbReference>
<dbReference type="SUPFAM" id="SSF110304">
    <property type="entry name" value="Coronavirus RNA-binding domain"/>
    <property type="match status" value="1"/>
</dbReference>
<dbReference type="SUPFAM" id="SSF103068">
    <property type="entry name" value="Nucleocapsid protein dimerization domain"/>
    <property type="match status" value="1"/>
</dbReference>
<dbReference type="PROSITE" id="PS51929">
    <property type="entry name" value="COV_N_CTD"/>
    <property type="match status" value="1"/>
</dbReference>
<dbReference type="PROSITE" id="PS51928">
    <property type="entry name" value="COV_N_NTD"/>
    <property type="match status" value="1"/>
</dbReference>
<accession>P03417</accession>
<keyword id="KW-0013">ADP-ribosylation</keyword>
<keyword id="KW-1040">Host Golgi apparatus</keyword>
<keyword id="KW-0597">Phosphoprotein</keyword>
<keyword id="KW-0687">Ribonucleoprotein</keyword>
<keyword id="KW-0694">RNA-binding</keyword>
<keyword id="KW-0804">Transcription</keyword>
<keyword id="KW-0805">Transcription regulation</keyword>
<keyword id="KW-0543">Viral nucleoprotein</keyword>
<keyword id="KW-0946">Virion</keyword>
<organismHost>
    <name type="scientific">Mus musculus</name>
    <name type="common">Mouse</name>
    <dbReference type="NCBI Taxonomy" id="10090"/>
</organismHost>